<reference key="1">
    <citation type="journal article" date="2006" name="Appl. Environ. Microbiol.">
        <title>Genome sequence of the chemolithoautotrophic nitrite-oxidizing bacterium Nitrobacter winogradskyi Nb-255.</title>
        <authorList>
            <person name="Starkenburg S.R."/>
            <person name="Chain P.S.G."/>
            <person name="Sayavedra-Soto L.A."/>
            <person name="Hauser L."/>
            <person name="Land M.L."/>
            <person name="Larimer F.W."/>
            <person name="Malfatti S.A."/>
            <person name="Klotz M.G."/>
            <person name="Bottomley P.J."/>
            <person name="Arp D.J."/>
            <person name="Hickey W.J."/>
        </authorList>
    </citation>
    <scope>NUCLEOTIDE SEQUENCE [LARGE SCALE GENOMIC DNA]</scope>
    <source>
        <strain>ATCC 25391 / DSM 10237 / CIP 104748 / NCIMB 11846 / Nb-255</strain>
    </source>
</reference>
<dbReference type="EMBL" id="CP000115">
    <property type="protein sequence ID" value="ABA03336.1"/>
    <property type="molecule type" value="Genomic_DNA"/>
</dbReference>
<dbReference type="RefSeq" id="WP_009796600.1">
    <property type="nucleotide sequence ID" value="NC_007406.1"/>
</dbReference>
<dbReference type="SMR" id="Q3SWK5"/>
<dbReference type="STRING" id="323098.Nwi_0068"/>
<dbReference type="KEGG" id="nwi:Nwi_0068"/>
<dbReference type="eggNOG" id="COG0291">
    <property type="taxonomic scope" value="Bacteria"/>
</dbReference>
<dbReference type="HOGENOM" id="CLU_169643_2_1_5"/>
<dbReference type="OrthoDB" id="9804851at2"/>
<dbReference type="Proteomes" id="UP000002531">
    <property type="component" value="Chromosome"/>
</dbReference>
<dbReference type="GO" id="GO:0022625">
    <property type="term" value="C:cytosolic large ribosomal subunit"/>
    <property type="evidence" value="ECO:0007669"/>
    <property type="project" value="TreeGrafter"/>
</dbReference>
<dbReference type="GO" id="GO:0003735">
    <property type="term" value="F:structural constituent of ribosome"/>
    <property type="evidence" value="ECO:0007669"/>
    <property type="project" value="InterPro"/>
</dbReference>
<dbReference type="GO" id="GO:0006412">
    <property type="term" value="P:translation"/>
    <property type="evidence" value="ECO:0007669"/>
    <property type="project" value="UniProtKB-UniRule"/>
</dbReference>
<dbReference type="FunFam" id="4.10.410.60:FF:000001">
    <property type="entry name" value="50S ribosomal protein L35"/>
    <property type="match status" value="1"/>
</dbReference>
<dbReference type="Gene3D" id="4.10.410.60">
    <property type="match status" value="1"/>
</dbReference>
<dbReference type="HAMAP" id="MF_00514">
    <property type="entry name" value="Ribosomal_bL35"/>
    <property type="match status" value="1"/>
</dbReference>
<dbReference type="InterPro" id="IPR001706">
    <property type="entry name" value="Ribosomal_bL35"/>
</dbReference>
<dbReference type="InterPro" id="IPR021137">
    <property type="entry name" value="Ribosomal_bL35-like"/>
</dbReference>
<dbReference type="InterPro" id="IPR018265">
    <property type="entry name" value="Ribosomal_bL35_CS"/>
</dbReference>
<dbReference type="InterPro" id="IPR037229">
    <property type="entry name" value="Ribosomal_bL35_sf"/>
</dbReference>
<dbReference type="NCBIfam" id="TIGR00001">
    <property type="entry name" value="rpmI_bact"/>
    <property type="match status" value="1"/>
</dbReference>
<dbReference type="PANTHER" id="PTHR33343">
    <property type="entry name" value="54S RIBOSOMAL PROTEIN BL35M"/>
    <property type="match status" value="1"/>
</dbReference>
<dbReference type="PANTHER" id="PTHR33343:SF1">
    <property type="entry name" value="LARGE RIBOSOMAL SUBUNIT PROTEIN BL35M"/>
    <property type="match status" value="1"/>
</dbReference>
<dbReference type="Pfam" id="PF01632">
    <property type="entry name" value="Ribosomal_L35p"/>
    <property type="match status" value="1"/>
</dbReference>
<dbReference type="PRINTS" id="PR00064">
    <property type="entry name" value="RIBOSOMALL35"/>
</dbReference>
<dbReference type="SUPFAM" id="SSF143034">
    <property type="entry name" value="L35p-like"/>
    <property type="match status" value="1"/>
</dbReference>
<dbReference type="PROSITE" id="PS00936">
    <property type="entry name" value="RIBOSOMAL_L35"/>
    <property type="match status" value="1"/>
</dbReference>
<protein>
    <recommendedName>
        <fullName evidence="1">Large ribosomal subunit protein bL35</fullName>
    </recommendedName>
    <alternativeName>
        <fullName evidence="3">50S ribosomal protein L35</fullName>
    </alternativeName>
</protein>
<name>RL35_NITWN</name>
<proteinExistence type="inferred from homology"/>
<gene>
    <name evidence="1" type="primary">rpmI</name>
    <name type="ordered locus">Nwi_0068</name>
</gene>
<feature type="chain" id="PRO_0000258714" description="Large ribosomal subunit protein bL35">
    <location>
        <begin position="1"/>
        <end position="66"/>
    </location>
</feature>
<feature type="region of interest" description="Disordered" evidence="2">
    <location>
        <begin position="20"/>
        <end position="40"/>
    </location>
</feature>
<evidence type="ECO:0000255" key="1">
    <source>
        <dbReference type="HAMAP-Rule" id="MF_00514"/>
    </source>
</evidence>
<evidence type="ECO:0000256" key="2">
    <source>
        <dbReference type="SAM" id="MobiDB-lite"/>
    </source>
</evidence>
<evidence type="ECO:0000305" key="3"/>
<accession>Q3SWK5</accession>
<comment type="similarity">
    <text evidence="1">Belongs to the bacterial ribosomal protein bL35 family.</text>
</comment>
<sequence length="66" mass="7636">MPKLKTKSGAKKRFKITATGKVKHAQRGKRHGMIKRTKKQIRQLRGTRVLFKTDGDNIKKYFLPNA</sequence>
<organism>
    <name type="scientific">Nitrobacter winogradskyi (strain ATCC 25391 / DSM 10237 / CIP 104748 / NCIMB 11846 / Nb-255)</name>
    <dbReference type="NCBI Taxonomy" id="323098"/>
    <lineage>
        <taxon>Bacteria</taxon>
        <taxon>Pseudomonadati</taxon>
        <taxon>Pseudomonadota</taxon>
        <taxon>Alphaproteobacteria</taxon>
        <taxon>Hyphomicrobiales</taxon>
        <taxon>Nitrobacteraceae</taxon>
        <taxon>Nitrobacter</taxon>
    </lineage>
</organism>
<keyword id="KW-1185">Reference proteome</keyword>
<keyword id="KW-0687">Ribonucleoprotein</keyword>
<keyword id="KW-0689">Ribosomal protein</keyword>